<comment type="function">
    <text evidence="1">Catalyzes the reversible isomerization-deamination of glucosamine 6-phosphate (GlcN6P) to form fructose 6-phosphate (Fru6P) and ammonium ion.</text>
</comment>
<comment type="catalytic activity">
    <reaction evidence="1">
        <text>alpha-D-glucosamine 6-phosphate + H2O = beta-D-fructose 6-phosphate + NH4(+)</text>
        <dbReference type="Rhea" id="RHEA:12172"/>
        <dbReference type="ChEBI" id="CHEBI:15377"/>
        <dbReference type="ChEBI" id="CHEBI:28938"/>
        <dbReference type="ChEBI" id="CHEBI:57634"/>
        <dbReference type="ChEBI" id="CHEBI:75989"/>
        <dbReference type="EC" id="3.5.99.6"/>
    </reaction>
</comment>
<comment type="pathway">
    <text evidence="1">Amino-sugar metabolism; N-acetylneuraminate degradation; D-fructose 6-phosphate from N-acetylneuraminate: step 5/5.</text>
</comment>
<comment type="similarity">
    <text evidence="1">Belongs to the glucosamine/galactosamine-6-phosphate isomerase family. NagB subfamily.</text>
</comment>
<dbReference type="EC" id="3.5.99.6" evidence="1"/>
<dbReference type="EMBL" id="CP000725">
    <property type="protein sequence ID" value="ABV09459.1"/>
    <property type="molecule type" value="Genomic_DNA"/>
</dbReference>
<dbReference type="RefSeq" id="WP_012130651.1">
    <property type="nucleotide sequence ID" value="NC_009785.1"/>
</dbReference>
<dbReference type="SMR" id="A8AYK4"/>
<dbReference type="STRING" id="467705.SGO_1586"/>
<dbReference type="KEGG" id="sgo:SGO_1586"/>
<dbReference type="eggNOG" id="COG0363">
    <property type="taxonomic scope" value="Bacteria"/>
</dbReference>
<dbReference type="HOGENOM" id="CLU_049611_1_0_9"/>
<dbReference type="UniPathway" id="UPA00629">
    <property type="reaction ID" value="UER00684"/>
</dbReference>
<dbReference type="Proteomes" id="UP000001131">
    <property type="component" value="Chromosome"/>
</dbReference>
<dbReference type="GO" id="GO:0005737">
    <property type="term" value="C:cytoplasm"/>
    <property type="evidence" value="ECO:0007669"/>
    <property type="project" value="TreeGrafter"/>
</dbReference>
<dbReference type="GO" id="GO:0004342">
    <property type="term" value="F:glucosamine-6-phosphate deaminase activity"/>
    <property type="evidence" value="ECO:0007669"/>
    <property type="project" value="UniProtKB-UniRule"/>
</dbReference>
<dbReference type="GO" id="GO:0042802">
    <property type="term" value="F:identical protein binding"/>
    <property type="evidence" value="ECO:0007669"/>
    <property type="project" value="TreeGrafter"/>
</dbReference>
<dbReference type="GO" id="GO:0005975">
    <property type="term" value="P:carbohydrate metabolic process"/>
    <property type="evidence" value="ECO:0007669"/>
    <property type="project" value="InterPro"/>
</dbReference>
<dbReference type="GO" id="GO:0006043">
    <property type="term" value="P:glucosamine catabolic process"/>
    <property type="evidence" value="ECO:0007669"/>
    <property type="project" value="TreeGrafter"/>
</dbReference>
<dbReference type="GO" id="GO:0006046">
    <property type="term" value="P:N-acetylglucosamine catabolic process"/>
    <property type="evidence" value="ECO:0007669"/>
    <property type="project" value="TreeGrafter"/>
</dbReference>
<dbReference type="GO" id="GO:0019262">
    <property type="term" value="P:N-acetylneuraminate catabolic process"/>
    <property type="evidence" value="ECO:0007669"/>
    <property type="project" value="UniProtKB-UniRule"/>
</dbReference>
<dbReference type="CDD" id="cd01399">
    <property type="entry name" value="GlcN6P_deaminase"/>
    <property type="match status" value="1"/>
</dbReference>
<dbReference type="FunFam" id="3.40.50.1360:FF:000003">
    <property type="entry name" value="Glucosamine-6-phosphate deaminase"/>
    <property type="match status" value="1"/>
</dbReference>
<dbReference type="Gene3D" id="3.40.50.1360">
    <property type="match status" value="1"/>
</dbReference>
<dbReference type="HAMAP" id="MF_01241">
    <property type="entry name" value="GlcN6P_deamin"/>
    <property type="match status" value="1"/>
</dbReference>
<dbReference type="InterPro" id="IPR006148">
    <property type="entry name" value="Glc/Gal-6P_isomerase"/>
</dbReference>
<dbReference type="InterPro" id="IPR004547">
    <property type="entry name" value="Glucosamine6P_isomerase"/>
</dbReference>
<dbReference type="InterPro" id="IPR018321">
    <property type="entry name" value="Glucosamine6P_isomerase_CS"/>
</dbReference>
<dbReference type="InterPro" id="IPR037171">
    <property type="entry name" value="NagB/RpiA_transferase-like"/>
</dbReference>
<dbReference type="NCBIfam" id="TIGR00502">
    <property type="entry name" value="nagB"/>
    <property type="match status" value="1"/>
</dbReference>
<dbReference type="PANTHER" id="PTHR11280">
    <property type="entry name" value="GLUCOSAMINE-6-PHOSPHATE ISOMERASE"/>
    <property type="match status" value="1"/>
</dbReference>
<dbReference type="PANTHER" id="PTHR11280:SF5">
    <property type="entry name" value="GLUCOSAMINE-6-PHOSPHATE ISOMERASE"/>
    <property type="match status" value="1"/>
</dbReference>
<dbReference type="Pfam" id="PF01182">
    <property type="entry name" value="Glucosamine_iso"/>
    <property type="match status" value="1"/>
</dbReference>
<dbReference type="SUPFAM" id="SSF100950">
    <property type="entry name" value="NagB/RpiA/CoA transferase-like"/>
    <property type="match status" value="1"/>
</dbReference>
<dbReference type="PROSITE" id="PS01161">
    <property type="entry name" value="GLC_GALNAC_ISOMERASE"/>
    <property type="match status" value="1"/>
</dbReference>
<feature type="chain" id="PRO_1000085759" description="Glucosamine-6-phosphate deaminase">
    <location>
        <begin position="1"/>
        <end position="235"/>
    </location>
</feature>
<feature type="active site" description="Proton acceptor; for enolization step" evidence="1">
    <location>
        <position position="62"/>
    </location>
</feature>
<feature type="active site" description="For ring-opening step" evidence="1">
    <location>
        <position position="128"/>
    </location>
</feature>
<feature type="active site" description="Proton acceptor; for ring-opening step" evidence="1">
    <location>
        <position position="130"/>
    </location>
</feature>
<feature type="active site" description="For ring-opening step" evidence="1">
    <location>
        <position position="135"/>
    </location>
</feature>
<name>NAGB_STRGC</name>
<gene>
    <name evidence="1" type="primary">nagB</name>
    <name type="ordered locus">SGO_1586</name>
</gene>
<evidence type="ECO:0000255" key="1">
    <source>
        <dbReference type="HAMAP-Rule" id="MF_01241"/>
    </source>
</evidence>
<proteinExistence type="inferred from homology"/>
<sequence length="235" mass="25337">MKIIQVADQNEGGKVAVEILRSKLAEGAKTLGLATGSSPLSFYKELIESDIDLSDLVSVNLDEYVGLEADDPQSYHYFMNENLFSHKPFKKSFLPNGKAEDAEEETEDYNRILSENPVDFQILGIGTNGHIGFNEPGTSFDSQTHLVDLTPSTIEANARFFETIDQVPTQAISMGIANIMAAKSIVLFAYGKGKAQAIAGTVAGPVTEELPASVLQGHEDVTIIADAEALSLLDN</sequence>
<protein>
    <recommendedName>
        <fullName evidence="1">Glucosamine-6-phosphate deaminase</fullName>
        <ecNumber evidence="1">3.5.99.6</ecNumber>
    </recommendedName>
    <alternativeName>
        <fullName evidence="1">GlcN6P deaminase</fullName>
        <shortName evidence="1">GNPDA</shortName>
    </alternativeName>
    <alternativeName>
        <fullName evidence="1">Glucosamine-6-phosphate isomerase</fullName>
    </alternativeName>
</protein>
<keyword id="KW-0119">Carbohydrate metabolism</keyword>
<keyword id="KW-0378">Hydrolase</keyword>
<keyword id="KW-1185">Reference proteome</keyword>
<organism>
    <name type="scientific">Streptococcus gordonii (strain Challis / ATCC 35105 / BCRC 15272 / CH1 / DL1 / V288)</name>
    <dbReference type="NCBI Taxonomy" id="467705"/>
    <lineage>
        <taxon>Bacteria</taxon>
        <taxon>Bacillati</taxon>
        <taxon>Bacillota</taxon>
        <taxon>Bacilli</taxon>
        <taxon>Lactobacillales</taxon>
        <taxon>Streptococcaceae</taxon>
        <taxon>Streptococcus</taxon>
    </lineage>
</organism>
<reference key="1">
    <citation type="journal article" date="2007" name="J. Bacteriol.">
        <title>Genome-wide transcriptional changes in Streptococcus gordonii in response to competence signaling peptide.</title>
        <authorList>
            <person name="Vickerman M.M."/>
            <person name="Iobst S."/>
            <person name="Jesionowski A.M."/>
            <person name="Gill S.R."/>
        </authorList>
    </citation>
    <scope>NUCLEOTIDE SEQUENCE [LARGE SCALE GENOMIC DNA]</scope>
    <source>
        <strain>Challis / ATCC 35105 / BCRC 15272 / CH1 / DL1 / V288</strain>
    </source>
</reference>
<accession>A8AYK4</accession>